<sequence length="123" mass="14179">MYNTYAIIVHVSKLRNSHLFANASAIPNLQAVIRKKLLDSMKSRQKDVASTLKVFLSEIEYANKSSKPVTTDLDVLRVLKKNIKKRKQAIEQFRKAERLDLAEKEESQIQTLRQFLPEHASNI</sequence>
<accession>C6Y4B8</accession>
<dbReference type="EMBL" id="CU329670">
    <property type="protein sequence ID" value="CBA11491.1"/>
    <property type="molecule type" value="Genomic_DNA"/>
</dbReference>
<dbReference type="RefSeq" id="XP_002742500.1">
    <property type="nucleotide sequence ID" value="XM_002742454.1"/>
</dbReference>
<dbReference type="SMR" id="C6Y4B8"/>
<dbReference type="STRING" id="284812.C6Y4B8"/>
<dbReference type="PaxDb" id="4896-SPAC22F3.15.1"/>
<dbReference type="EnsemblFungi" id="SPAC22F3.15.1">
    <property type="protein sequence ID" value="SPAC22F3.15.1:pep"/>
    <property type="gene ID" value="SPAC22F3.15"/>
</dbReference>
<dbReference type="PomBase" id="SPAC22F3.15"/>
<dbReference type="VEuPathDB" id="FungiDB:SPAC22F3.15"/>
<dbReference type="eggNOG" id="ENOG502RS07">
    <property type="taxonomic scope" value="Eukaryota"/>
</dbReference>
<dbReference type="HOGENOM" id="CLU_2062823_0_0_1"/>
<dbReference type="InParanoid" id="C6Y4B8"/>
<dbReference type="OMA" id="NVMPALQ"/>
<dbReference type="PRO" id="PR:C6Y4B8"/>
<dbReference type="Proteomes" id="UP000002485">
    <property type="component" value="Chromosome I"/>
</dbReference>
<dbReference type="GO" id="GO:0005759">
    <property type="term" value="C:mitochondrial matrix"/>
    <property type="evidence" value="ECO:0000303"/>
    <property type="project" value="PomBase"/>
</dbReference>
<dbReference type="GO" id="GO:0016884">
    <property type="term" value="F:carbon-nitrogen ligase activity, with glutamine as amido-N-donor"/>
    <property type="evidence" value="ECO:0007669"/>
    <property type="project" value="InterPro"/>
</dbReference>
<dbReference type="GO" id="GO:0070900">
    <property type="term" value="P:mitochondrial tRNA modification"/>
    <property type="evidence" value="ECO:0000255"/>
    <property type="project" value="PomBase"/>
</dbReference>
<dbReference type="Gene3D" id="1.10.1510.10">
    <property type="entry name" value="Uncharacterised protein YqeY/AIM41 PF09424, N-terminal domain"/>
    <property type="match status" value="1"/>
</dbReference>
<dbReference type="InterPro" id="IPR003789">
    <property type="entry name" value="Asn/Gln_tRNA_amidoTrase-B-like"/>
</dbReference>
<dbReference type="InterPro" id="IPR019004">
    <property type="entry name" value="YqeY/Aim41"/>
</dbReference>
<dbReference type="InterPro" id="IPR042184">
    <property type="entry name" value="YqeY/Aim41_N"/>
</dbReference>
<dbReference type="PANTHER" id="PTHR28055">
    <property type="entry name" value="ALTERED INHERITANCE OF MITOCHONDRIA PROTEIN 41, MITOCHONDRIAL"/>
    <property type="match status" value="1"/>
</dbReference>
<dbReference type="PANTHER" id="PTHR28055:SF1">
    <property type="entry name" value="ALTERED INHERITANCE OF MITOCHONDRIA PROTEIN 41, MITOCHONDRIAL"/>
    <property type="match status" value="1"/>
</dbReference>
<dbReference type="Pfam" id="PF09424">
    <property type="entry name" value="YqeY"/>
    <property type="match status" value="1"/>
</dbReference>
<dbReference type="SUPFAM" id="SSF89095">
    <property type="entry name" value="GatB/YqeY motif"/>
    <property type="match status" value="1"/>
</dbReference>
<keyword id="KW-1185">Reference proteome</keyword>
<protein>
    <recommendedName>
        <fullName>Uncharacterized protein C22F3.15</fullName>
    </recommendedName>
</protein>
<name>YA8O_SCHPO</name>
<proteinExistence type="evidence at transcript level"/>
<feature type="chain" id="PRO_0000389168" description="Uncharacterized protein C22F3.15">
    <location>
        <begin position="1"/>
        <end position="123"/>
    </location>
</feature>
<gene>
    <name type="ORF">SPAC22F3.15</name>
</gene>
<organism>
    <name type="scientific">Schizosaccharomyces pombe (strain 972 / ATCC 24843)</name>
    <name type="common">Fission yeast</name>
    <dbReference type="NCBI Taxonomy" id="284812"/>
    <lineage>
        <taxon>Eukaryota</taxon>
        <taxon>Fungi</taxon>
        <taxon>Dikarya</taxon>
        <taxon>Ascomycota</taxon>
        <taxon>Taphrinomycotina</taxon>
        <taxon>Schizosaccharomycetes</taxon>
        <taxon>Schizosaccharomycetales</taxon>
        <taxon>Schizosaccharomycetaceae</taxon>
        <taxon>Schizosaccharomyces</taxon>
    </lineage>
</organism>
<reference key="1">
    <citation type="journal article" date="2002" name="Nature">
        <title>The genome sequence of Schizosaccharomyces pombe.</title>
        <authorList>
            <person name="Wood V."/>
            <person name="Gwilliam R."/>
            <person name="Rajandream M.A."/>
            <person name="Lyne M.H."/>
            <person name="Lyne R."/>
            <person name="Stewart A."/>
            <person name="Sgouros J.G."/>
            <person name="Peat N."/>
            <person name="Hayles J."/>
            <person name="Baker S.G."/>
            <person name="Basham D."/>
            <person name="Bowman S."/>
            <person name="Brooks K."/>
            <person name="Brown D."/>
            <person name="Brown S."/>
            <person name="Chillingworth T."/>
            <person name="Churcher C.M."/>
            <person name="Collins M."/>
            <person name="Connor R."/>
            <person name="Cronin A."/>
            <person name="Davis P."/>
            <person name="Feltwell T."/>
            <person name="Fraser A."/>
            <person name="Gentles S."/>
            <person name="Goble A."/>
            <person name="Hamlin N."/>
            <person name="Harris D.E."/>
            <person name="Hidalgo J."/>
            <person name="Hodgson G."/>
            <person name="Holroyd S."/>
            <person name="Hornsby T."/>
            <person name="Howarth S."/>
            <person name="Huckle E.J."/>
            <person name="Hunt S."/>
            <person name="Jagels K."/>
            <person name="James K.D."/>
            <person name="Jones L."/>
            <person name="Jones M."/>
            <person name="Leather S."/>
            <person name="McDonald S."/>
            <person name="McLean J."/>
            <person name="Mooney P."/>
            <person name="Moule S."/>
            <person name="Mungall K.L."/>
            <person name="Murphy L.D."/>
            <person name="Niblett D."/>
            <person name="Odell C."/>
            <person name="Oliver K."/>
            <person name="O'Neil S."/>
            <person name="Pearson D."/>
            <person name="Quail M.A."/>
            <person name="Rabbinowitsch E."/>
            <person name="Rutherford K.M."/>
            <person name="Rutter S."/>
            <person name="Saunders D."/>
            <person name="Seeger K."/>
            <person name="Sharp S."/>
            <person name="Skelton J."/>
            <person name="Simmonds M.N."/>
            <person name="Squares R."/>
            <person name="Squares S."/>
            <person name="Stevens K."/>
            <person name="Taylor K."/>
            <person name="Taylor R.G."/>
            <person name="Tivey A."/>
            <person name="Walsh S.V."/>
            <person name="Warren T."/>
            <person name="Whitehead S."/>
            <person name="Woodward J.R."/>
            <person name="Volckaert G."/>
            <person name="Aert R."/>
            <person name="Robben J."/>
            <person name="Grymonprez B."/>
            <person name="Weltjens I."/>
            <person name="Vanstreels E."/>
            <person name="Rieger M."/>
            <person name="Schaefer M."/>
            <person name="Mueller-Auer S."/>
            <person name="Gabel C."/>
            <person name="Fuchs M."/>
            <person name="Duesterhoeft A."/>
            <person name="Fritzc C."/>
            <person name="Holzer E."/>
            <person name="Moestl D."/>
            <person name="Hilbert H."/>
            <person name="Borzym K."/>
            <person name="Langer I."/>
            <person name="Beck A."/>
            <person name="Lehrach H."/>
            <person name="Reinhardt R."/>
            <person name="Pohl T.M."/>
            <person name="Eger P."/>
            <person name="Zimmermann W."/>
            <person name="Wedler H."/>
            <person name="Wambutt R."/>
            <person name="Purnelle B."/>
            <person name="Goffeau A."/>
            <person name="Cadieu E."/>
            <person name="Dreano S."/>
            <person name="Gloux S."/>
            <person name="Lelaure V."/>
            <person name="Mottier S."/>
            <person name="Galibert F."/>
            <person name="Aves S.J."/>
            <person name="Xiang Z."/>
            <person name="Hunt C."/>
            <person name="Moore K."/>
            <person name="Hurst S.M."/>
            <person name="Lucas M."/>
            <person name="Rochet M."/>
            <person name="Gaillardin C."/>
            <person name="Tallada V.A."/>
            <person name="Garzon A."/>
            <person name="Thode G."/>
            <person name="Daga R.R."/>
            <person name="Cruzado L."/>
            <person name="Jimenez J."/>
            <person name="Sanchez M."/>
            <person name="del Rey F."/>
            <person name="Benito J."/>
            <person name="Dominguez A."/>
            <person name="Revuelta J.L."/>
            <person name="Moreno S."/>
            <person name="Armstrong J."/>
            <person name="Forsburg S.L."/>
            <person name="Cerutti L."/>
            <person name="Lowe T."/>
            <person name="McCombie W.R."/>
            <person name="Paulsen I."/>
            <person name="Potashkin J."/>
            <person name="Shpakovski G.V."/>
            <person name="Ussery D."/>
            <person name="Barrell B.G."/>
            <person name="Nurse P."/>
        </authorList>
    </citation>
    <scope>NUCLEOTIDE SEQUENCE [LARGE SCALE GENOMIC DNA]</scope>
    <source>
        <strain>972 / ATCC 24843</strain>
    </source>
</reference>
<reference key="2">
    <citation type="journal article" date="2008" name="Nature">
        <title>Dynamic repertoire of a eukaryotic transcriptome surveyed at single-nucleotide resolution.</title>
        <authorList>
            <person name="Wilhelm B.T."/>
            <person name="Marguerat S."/>
            <person name="Watt S."/>
            <person name="Schubert F."/>
            <person name="Wood V."/>
            <person name="Goodhead I."/>
            <person name="Penkett C.J."/>
            <person name="Rogers J."/>
            <person name="Baehler J."/>
        </authorList>
    </citation>
    <scope>IDENTIFICATION</scope>
</reference>